<proteinExistence type="evidence at protein level"/>
<reference key="1">
    <citation type="journal article" date="2005" name="PLoS Biol.">
        <title>The genomes of Oryza sativa: a history of duplications.</title>
        <authorList>
            <person name="Yu J."/>
            <person name="Wang J."/>
            <person name="Lin W."/>
            <person name="Li S."/>
            <person name="Li H."/>
            <person name="Zhou J."/>
            <person name="Ni P."/>
            <person name="Dong W."/>
            <person name="Hu S."/>
            <person name="Zeng C."/>
            <person name="Zhang J."/>
            <person name="Zhang Y."/>
            <person name="Li R."/>
            <person name="Xu Z."/>
            <person name="Li S."/>
            <person name="Li X."/>
            <person name="Zheng H."/>
            <person name="Cong L."/>
            <person name="Lin L."/>
            <person name="Yin J."/>
            <person name="Geng J."/>
            <person name="Li G."/>
            <person name="Shi J."/>
            <person name="Liu J."/>
            <person name="Lv H."/>
            <person name="Li J."/>
            <person name="Wang J."/>
            <person name="Deng Y."/>
            <person name="Ran L."/>
            <person name="Shi X."/>
            <person name="Wang X."/>
            <person name="Wu Q."/>
            <person name="Li C."/>
            <person name="Ren X."/>
            <person name="Wang J."/>
            <person name="Wang X."/>
            <person name="Li D."/>
            <person name="Liu D."/>
            <person name="Zhang X."/>
            <person name="Ji Z."/>
            <person name="Zhao W."/>
            <person name="Sun Y."/>
            <person name="Zhang Z."/>
            <person name="Bao J."/>
            <person name="Han Y."/>
            <person name="Dong L."/>
            <person name="Ji J."/>
            <person name="Chen P."/>
            <person name="Wu S."/>
            <person name="Liu J."/>
            <person name="Xiao Y."/>
            <person name="Bu D."/>
            <person name="Tan J."/>
            <person name="Yang L."/>
            <person name="Ye C."/>
            <person name="Zhang J."/>
            <person name="Xu J."/>
            <person name="Zhou Y."/>
            <person name="Yu Y."/>
            <person name="Zhang B."/>
            <person name="Zhuang S."/>
            <person name="Wei H."/>
            <person name="Liu B."/>
            <person name="Lei M."/>
            <person name="Yu H."/>
            <person name="Li Y."/>
            <person name="Xu H."/>
            <person name="Wei S."/>
            <person name="He X."/>
            <person name="Fang L."/>
            <person name="Zhang Z."/>
            <person name="Zhang Y."/>
            <person name="Huang X."/>
            <person name="Su Z."/>
            <person name="Tong W."/>
            <person name="Li J."/>
            <person name="Tong Z."/>
            <person name="Li S."/>
            <person name="Ye J."/>
            <person name="Wang L."/>
            <person name="Fang L."/>
            <person name="Lei T."/>
            <person name="Chen C.-S."/>
            <person name="Chen H.-C."/>
            <person name="Xu Z."/>
            <person name="Li H."/>
            <person name="Huang H."/>
            <person name="Zhang F."/>
            <person name="Xu H."/>
            <person name="Li N."/>
            <person name="Zhao C."/>
            <person name="Li S."/>
            <person name="Dong L."/>
            <person name="Huang Y."/>
            <person name="Li L."/>
            <person name="Xi Y."/>
            <person name="Qi Q."/>
            <person name="Li W."/>
            <person name="Zhang B."/>
            <person name="Hu W."/>
            <person name="Zhang Y."/>
            <person name="Tian X."/>
            <person name="Jiao Y."/>
            <person name="Liang X."/>
            <person name="Jin J."/>
            <person name="Gao L."/>
            <person name="Zheng W."/>
            <person name="Hao B."/>
            <person name="Liu S.-M."/>
            <person name="Wang W."/>
            <person name="Yuan L."/>
            <person name="Cao M."/>
            <person name="McDermott J."/>
            <person name="Samudrala R."/>
            <person name="Wang J."/>
            <person name="Wong G.K.-S."/>
            <person name="Yang H."/>
        </authorList>
    </citation>
    <scope>NUCLEOTIDE SEQUENCE [LARGE SCALE GENOMIC DNA]</scope>
    <source>
        <strain>cv. 93-11</strain>
    </source>
</reference>
<reference key="2">
    <citation type="journal article" date="2003" name="J. Plant Physiol.">
        <title>Accumulation of LEA proteins in salt (NaCl) stressed young seedlings of rice (Oryza sativa L.) cultivar Bura Rata and their degradation during recovery from salinity stress.</title>
        <authorList>
            <person name="Chourey K."/>
            <person name="Ramani S."/>
            <person name="Apte S.K."/>
        </authorList>
    </citation>
    <scope>PROTEIN SEQUENCE OF 123-134</scope>
    <scope>INDUCTION</scope>
    <source>
        <strain>cv. Bura Rata</strain>
        <tissue>Seedling leaf</tissue>
    </source>
</reference>
<evidence type="ECO:0000255" key="1"/>
<evidence type="ECO:0000256" key="2">
    <source>
        <dbReference type="SAM" id="MobiDB-lite"/>
    </source>
</evidence>
<evidence type="ECO:0000269" key="3">
    <source>
    </source>
</evidence>
<evidence type="ECO:0000305" key="4"/>
<dbReference type="EMBL" id="CM000128">
    <property type="status" value="NOT_ANNOTATED_CDS"/>
    <property type="molecule type" value="Genomic_DNA"/>
</dbReference>
<dbReference type="SMR" id="A2XG55"/>
<dbReference type="STRING" id="39946.A2XG55"/>
<dbReference type="EnsemblPlants" id="OsGoSa_03g0015800.02">
    <property type="protein sequence ID" value="OsGoSa_03g0015800.02"/>
    <property type="gene ID" value="OsGoSa_03g0015800"/>
</dbReference>
<dbReference type="EnsemblPlants" id="OsIR64_03g0015500.02">
    <property type="protein sequence ID" value="OsIR64_03g0015500.02"/>
    <property type="gene ID" value="OsIR64_03g0015500"/>
</dbReference>
<dbReference type="EnsemblPlants" id="OsKYG_03g0015770.01">
    <property type="protein sequence ID" value="OsKYG_03g0015770.01"/>
    <property type="gene ID" value="OsKYG_03g0015770"/>
</dbReference>
<dbReference type="EnsemblPlants" id="OsLaMu_03g0015620.02">
    <property type="protein sequence ID" value="OsLaMu_03g0015620.02"/>
    <property type="gene ID" value="OsLaMu_03g0015620"/>
</dbReference>
<dbReference type="EnsemblPlants" id="OsLima_03g0015760.01">
    <property type="protein sequence ID" value="OsLima_03g0015760.01"/>
    <property type="gene ID" value="OsLima_03g0015760"/>
</dbReference>
<dbReference type="Gramene" id="OsGoSa_03g0015800.02">
    <property type="protein sequence ID" value="OsGoSa_03g0015800.02"/>
    <property type="gene ID" value="OsGoSa_03g0015800"/>
</dbReference>
<dbReference type="Gramene" id="OsIR64_03g0015500.02">
    <property type="protein sequence ID" value="OsIR64_03g0015500.02"/>
    <property type="gene ID" value="OsIR64_03g0015500"/>
</dbReference>
<dbReference type="Gramene" id="OsKYG_03g0015770.01">
    <property type="protein sequence ID" value="OsKYG_03g0015770.01"/>
    <property type="gene ID" value="OsKYG_03g0015770"/>
</dbReference>
<dbReference type="Gramene" id="OsLaMu_03g0015620.02">
    <property type="protein sequence ID" value="OsLaMu_03g0015620.02"/>
    <property type="gene ID" value="OsLaMu_03g0015620"/>
</dbReference>
<dbReference type="Gramene" id="OsLima_03g0015760.01">
    <property type="protein sequence ID" value="OsLima_03g0015760.01"/>
    <property type="gene ID" value="OsLima_03g0015760"/>
</dbReference>
<dbReference type="HOGENOM" id="CLU_072697_0_0_1"/>
<dbReference type="OrthoDB" id="1907061at2759"/>
<dbReference type="Proteomes" id="UP000007015">
    <property type="component" value="Chromosome 3"/>
</dbReference>
<dbReference type="GO" id="GO:0005829">
    <property type="term" value="C:cytosol"/>
    <property type="evidence" value="ECO:0007669"/>
    <property type="project" value="TreeGrafter"/>
</dbReference>
<dbReference type="GO" id="GO:0009631">
    <property type="term" value="P:cold acclimation"/>
    <property type="evidence" value="ECO:0007669"/>
    <property type="project" value="TreeGrafter"/>
</dbReference>
<dbReference type="Gene3D" id="6.10.140.1430">
    <property type="match status" value="2"/>
</dbReference>
<dbReference type="PANTHER" id="PTHR47877">
    <property type="entry name" value="LATE EMBRYOGENESIS ABUNDANT DOMAIN-CONTAINING PROTEIN / LEA DOMAIN-CONTAINING PROTEIN"/>
    <property type="match status" value="1"/>
</dbReference>
<dbReference type="PANTHER" id="PTHR47877:SF8">
    <property type="entry name" value="LATE EMBRYOGENESIS ABUNDANT PROTEIN 17"/>
    <property type="match status" value="1"/>
</dbReference>
<dbReference type="SUPFAM" id="SSF58113">
    <property type="entry name" value="Apolipoprotein A-I"/>
    <property type="match status" value="1"/>
</dbReference>
<sequence length="333" mass="35662">MASRQDRREARAEADARRAAEEIARARDERVMQAEVDARSAADEIARARADRGAATMGADTAHHAAAGGGILESVQEGAKSFVSAVGRTFGGARDTAAEKTSQTADATRDKLGEYKDYTADKARETNDSVARKTNETADATRDKLGEYKDYTADKTQETKDAVAQKASDASEATKNKLGEYKDALARKTRDAKDTTAQKATEFKDGVKATAQETRDATKDTTQTAADKARETAATHDDATDKGQGQGLLGALGNVTGAIKEKLTVSPAATQEHLGGGEERAVKERAAEKAASVYFEEKDRLTRERAAERVDKCVEKCVEGCPDATCAHRHGKM</sequence>
<keyword id="KW-0175">Coiled coil</keyword>
<keyword id="KW-0903">Direct protein sequencing</keyword>
<keyword id="KW-1185">Reference proteome</keyword>
<feature type="chain" id="PRO_0000296249" description="Late embryogenesis abundant protein 1">
    <location>
        <begin position="1"/>
        <end position="333"/>
    </location>
</feature>
<feature type="region of interest" description="Disordered" evidence="2">
    <location>
        <begin position="1"/>
        <end position="20"/>
    </location>
</feature>
<feature type="region of interest" description="Disordered" evidence="2">
    <location>
        <begin position="116"/>
        <end position="246"/>
    </location>
</feature>
<feature type="coiled-coil region" evidence="1">
    <location>
        <begin position="3"/>
        <end position="52"/>
    </location>
</feature>
<feature type="compositionally biased region" description="Basic and acidic residues" evidence="2">
    <location>
        <begin position="116"/>
        <end position="163"/>
    </location>
</feature>
<feature type="compositionally biased region" description="Basic and acidic residues" evidence="2">
    <location>
        <begin position="172"/>
        <end position="219"/>
    </location>
</feature>
<feature type="compositionally biased region" description="Basic and acidic residues" evidence="2">
    <location>
        <begin position="227"/>
        <end position="241"/>
    </location>
</feature>
<feature type="sequence conflict" description="In Ref. 2; AA sequence." evidence="4" ref="2">
    <original>R</original>
    <variation>H</variation>
    <location>
        <position position="132"/>
    </location>
</feature>
<gene>
    <name type="primary">LEA1</name>
    <name type="ORF">OsI_011048</name>
</gene>
<organism>
    <name type="scientific">Oryza sativa subsp. indica</name>
    <name type="common">Rice</name>
    <dbReference type="NCBI Taxonomy" id="39946"/>
    <lineage>
        <taxon>Eukaryota</taxon>
        <taxon>Viridiplantae</taxon>
        <taxon>Streptophyta</taxon>
        <taxon>Embryophyta</taxon>
        <taxon>Tracheophyta</taxon>
        <taxon>Spermatophyta</taxon>
        <taxon>Magnoliopsida</taxon>
        <taxon>Liliopsida</taxon>
        <taxon>Poales</taxon>
        <taxon>Poaceae</taxon>
        <taxon>BOP clade</taxon>
        <taxon>Oryzoideae</taxon>
        <taxon>Oryzeae</taxon>
        <taxon>Oryzinae</taxon>
        <taxon>Oryza</taxon>
        <taxon>Oryza sativa</taxon>
    </lineage>
</organism>
<name>LEA1_ORYSI</name>
<accession>A2XG55</accession>
<accession>P83196</accession>
<accession>Q10M52</accession>
<comment type="induction">
    <text evidence="3">In seedling leaves, by salt stress.</text>
</comment>
<comment type="similarity">
    <text evidence="4">Belongs to the LEA type 4 family.</text>
</comment>
<protein>
    <recommendedName>
        <fullName>Late embryogenesis abundant protein 1</fullName>
    </recommendedName>
</protein>